<proteinExistence type="evidence at protein level"/>
<reference key="1">
    <citation type="journal article" date="2005" name="J. Microbiol. Biotechnol.">
        <title>Cloning and characterization of cyclohexanol dehydrogenase gene from Rhodococcus sp. TK6.</title>
        <authorList>
            <person name="Choi J.-H."/>
            <person name="Kim T.-K."/>
            <person name="Kim Y.-M."/>
            <person name="Kim W.-C."/>
            <person name="Joo G.-J."/>
            <person name="Lee K.Y."/>
            <person name="Rhee I.-K."/>
        </authorList>
    </citation>
    <scope>NUCLEOTIDE SEQUENCE [GENOMIC DNA]</scope>
    <scope>FUNCTION</scope>
    <scope>CATALYTIC ACTIVITY</scope>
    <scope>BIOPHYSICOCHEMICAL PROPERTIES</scope>
</reference>
<reference key="2">
    <citation type="journal article" date="2002" name="J. Microbiol. Biotechnol.">
        <title>Purification and characterization of a cyclohexanol dehydrogenase from Rhodococcus sp. TK6.</title>
        <authorList>
            <person name="Kim T.-K."/>
            <person name="Choi J.-H."/>
            <person name="Rhee I.-K."/>
        </authorList>
    </citation>
    <scope>PROTEIN SEQUENCE OF 10-24</scope>
    <scope>FUNCTION</scope>
    <scope>CATALYTIC ACTIVITY</scope>
    <scope>ACTIVITY REGULATION</scope>
    <scope>BIOPHYSICOCHEMICAL PROPERTIES</scope>
    <scope>SUBUNIT</scope>
    <scope>SUBCELLULAR LOCATION</scope>
    <scope>INDUCTION</scope>
</reference>
<protein>
    <recommendedName>
        <fullName evidence="5">Cyclohexanol dehydrogenase</fullName>
        <ecNumber evidence="2 3">1.1.1.245</ecNumber>
    </recommendedName>
    <alternativeName>
        <fullName evidence="5">Cyclohexanol dehydrogenase II</fullName>
        <shortName evidence="5">CHD II</shortName>
    </alternativeName>
</protein>
<accession>Q6TMA3</accession>
<name>CHNA_RHOS6</name>
<evidence type="ECO:0000250" key="1">
    <source>
        <dbReference type="UniProtKB" id="P9WGT1"/>
    </source>
</evidence>
<evidence type="ECO:0000269" key="2">
    <source ref="1"/>
</evidence>
<evidence type="ECO:0000269" key="3">
    <source ref="2"/>
</evidence>
<evidence type="ECO:0000303" key="4">
    <source ref="1"/>
</evidence>
<evidence type="ECO:0000303" key="5">
    <source ref="2"/>
</evidence>
<evidence type="ECO:0000305" key="6"/>
<evidence type="ECO:0000305" key="7">
    <source ref="2"/>
</evidence>
<dbReference type="EC" id="1.1.1.245" evidence="2 3"/>
<dbReference type="EMBL" id="AY394000">
    <property type="protein sequence ID" value="AAR27575.1"/>
    <property type="molecule type" value="Genomic_DNA"/>
</dbReference>
<dbReference type="SMR" id="Q6TMA3"/>
<dbReference type="GO" id="GO:0005737">
    <property type="term" value="C:cytoplasm"/>
    <property type="evidence" value="ECO:0007669"/>
    <property type="project" value="UniProtKB-SubCell"/>
</dbReference>
<dbReference type="GO" id="GO:0016616">
    <property type="term" value="F:oxidoreductase activity, acting on the CH-OH group of donors, NAD or NADP as acceptor"/>
    <property type="evidence" value="ECO:0007669"/>
    <property type="project" value="TreeGrafter"/>
</dbReference>
<dbReference type="CDD" id="cd05233">
    <property type="entry name" value="SDR_c"/>
    <property type="match status" value="1"/>
</dbReference>
<dbReference type="FunFam" id="3.40.50.720:FF:000084">
    <property type="entry name" value="Short-chain dehydrogenase reductase"/>
    <property type="match status" value="1"/>
</dbReference>
<dbReference type="Gene3D" id="3.40.50.720">
    <property type="entry name" value="NAD(P)-binding Rossmann-like Domain"/>
    <property type="match status" value="1"/>
</dbReference>
<dbReference type="InterPro" id="IPR036291">
    <property type="entry name" value="NAD(P)-bd_dom_sf"/>
</dbReference>
<dbReference type="InterPro" id="IPR002347">
    <property type="entry name" value="SDR_fam"/>
</dbReference>
<dbReference type="PANTHER" id="PTHR42760:SF133">
    <property type="entry name" value="3-OXOACYL-[ACYL-CARRIER-PROTEIN] REDUCTASE"/>
    <property type="match status" value="1"/>
</dbReference>
<dbReference type="PANTHER" id="PTHR42760">
    <property type="entry name" value="SHORT-CHAIN DEHYDROGENASES/REDUCTASES FAMILY MEMBER"/>
    <property type="match status" value="1"/>
</dbReference>
<dbReference type="Pfam" id="PF13561">
    <property type="entry name" value="adh_short_C2"/>
    <property type="match status" value="1"/>
</dbReference>
<dbReference type="PRINTS" id="PR00081">
    <property type="entry name" value="GDHRDH"/>
</dbReference>
<dbReference type="PRINTS" id="PR00080">
    <property type="entry name" value="SDRFAMILY"/>
</dbReference>
<dbReference type="SUPFAM" id="SSF51735">
    <property type="entry name" value="NAD(P)-binding Rossmann-fold domains"/>
    <property type="match status" value="1"/>
</dbReference>
<comment type="function">
    <text evidence="2 3">Catalyzes the oxidation of cyclohexanol to cyclohexanone. Can also use a broad range of other alcohols, including trans-cyclohexane-1,2-diol, trans-cyclopentane-1,2-diol, cyclopentanol, hexane-1,2-diol, ethanol, 1-propanol, 1-butanol, 1-pentanol and 1-hexanol.</text>
</comment>
<comment type="catalytic activity">
    <reaction evidence="2 3">
        <text>cyclohexanol + NAD(+) = cyclohexanone + NADH + H(+)</text>
        <dbReference type="Rhea" id="RHEA:10044"/>
        <dbReference type="ChEBI" id="CHEBI:15378"/>
        <dbReference type="ChEBI" id="CHEBI:17854"/>
        <dbReference type="ChEBI" id="CHEBI:18099"/>
        <dbReference type="ChEBI" id="CHEBI:57540"/>
        <dbReference type="ChEBI" id="CHEBI:57945"/>
        <dbReference type="EC" id="1.1.1.245"/>
    </reaction>
</comment>
<comment type="activity regulation">
    <text evidence="3">Activity is enhanced by the addition of Ba(2+) and Mg(2+), but inhibited by the addition of Al(3+), Ca(2+), Co(2+), Cu(2+), Mn(2+) and Zn(2+).</text>
</comment>
<comment type="biophysicochemical properties">
    <kinetics>
        <KM evidence="3">1.7 mM for cyclohexanol</KM>
        <KM evidence="3">2.8 mM for trans-cyclohexane-1,2-diol</KM>
        <KM evidence="3">14.2 mM for cyclopentanol</KM>
        <KM evidence="3">13.7 mM for trans-cyclopentane-1,2-diol</KM>
        <KM evidence="3">13.5 mM for hexane-1,2-diol</KM>
    </kinetics>
    <phDependence>
        <text evidence="2 3">Optimum pH is 8.0 (Ref.1). Stable between pH 7.5 and 8.5 (Ref.2).</text>
    </phDependence>
    <temperatureDependence>
        <text evidence="3">Rapidly inactivated at temperatures above 40 degrees Celsius.</text>
    </temperatureDependence>
</comment>
<comment type="subunit">
    <text evidence="3">Homodimer.</text>
</comment>
<comment type="subcellular location">
    <subcellularLocation>
        <location evidence="7">Cytoplasm</location>
    </subcellularLocation>
</comment>
<comment type="induction">
    <text evidence="3">Induced by cyclohexanol.</text>
</comment>
<comment type="similarity">
    <text evidence="6">Belongs to the short-chain dehydrogenases/reductases (SDR) family.</text>
</comment>
<organism>
    <name type="scientific">Rhodococcus sp. (strain TK6)</name>
    <dbReference type="NCBI Taxonomy" id="249095"/>
    <lineage>
        <taxon>Bacteria</taxon>
        <taxon>Bacillati</taxon>
        <taxon>Actinomycetota</taxon>
        <taxon>Actinomycetes</taxon>
        <taxon>Mycobacteriales</taxon>
        <taxon>Nocardiaceae</taxon>
        <taxon>Rhodococcus</taxon>
    </lineage>
</organism>
<gene>
    <name evidence="4" type="primary">chnA</name>
</gene>
<feature type="chain" id="PRO_0000453523" description="Cyclohexanol dehydrogenase">
    <location>
        <begin position="1"/>
        <end position="270"/>
    </location>
</feature>
<feature type="active site" description="Proton acceptor" evidence="1">
    <location>
        <position position="176"/>
    </location>
</feature>
<feature type="binding site" evidence="1">
    <location>
        <position position="19"/>
    </location>
    <ligand>
        <name>NAD(+)</name>
        <dbReference type="ChEBI" id="CHEBI:57540"/>
    </ligand>
</feature>
<feature type="binding site" evidence="1">
    <location>
        <position position="40"/>
    </location>
    <ligand>
        <name>NAD(+)</name>
        <dbReference type="ChEBI" id="CHEBI:57540"/>
    </ligand>
</feature>
<feature type="binding site" evidence="1">
    <location>
        <position position="78"/>
    </location>
    <ligand>
        <name>NAD(+)</name>
        <dbReference type="ChEBI" id="CHEBI:57540"/>
    </ligand>
</feature>
<feature type="binding site" evidence="1">
    <location>
        <position position="79"/>
    </location>
    <ligand>
        <name>NAD(+)</name>
        <dbReference type="ChEBI" id="CHEBI:57540"/>
    </ligand>
</feature>
<feature type="binding site" evidence="1">
    <location>
        <position position="105"/>
    </location>
    <ligand>
        <name>NAD(+)</name>
        <dbReference type="ChEBI" id="CHEBI:57540"/>
    </ligand>
</feature>
<feature type="binding site" evidence="1">
    <location>
        <position position="176"/>
    </location>
    <ligand>
        <name>NAD(+)</name>
        <dbReference type="ChEBI" id="CHEBI:57540"/>
    </ligand>
</feature>
<feature type="binding site" evidence="1">
    <location>
        <position position="180"/>
    </location>
    <ligand>
        <name>NAD(+)</name>
        <dbReference type="ChEBI" id="CHEBI:57540"/>
    </ligand>
</feature>
<feature type="binding site" evidence="1">
    <location>
        <position position="209"/>
    </location>
    <ligand>
        <name>NAD(+)</name>
        <dbReference type="ChEBI" id="CHEBI:57540"/>
    </ligand>
</feature>
<feature type="binding site" evidence="1">
    <location>
        <position position="211"/>
    </location>
    <ligand>
        <name>NAD(+)</name>
        <dbReference type="ChEBI" id="CHEBI:57540"/>
    </ligand>
</feature>
<feature type="sequence conflict" description="In Ref. 2; AA sequence." evidence="6" ref="2">
    <original>K</original>
    <variation>T</variation>
    <location>
        <position position="10"/>
    </location>
</feature>
<feature type="sequence conflict" description="In Ref. 2; AA sequence." evidence="6" ref="2">
    <original>L</original>
    <variation>H</variation>
    <location>
        <position position="13"/>
    </location>
</feature>
<sequence>MTDNLPLRGKVALVTGAARGIGRAYALRLAKRGADVAVVDFDLHSYKDYQLEAASMRGDTVVDEIREIGMRALGFQADVTDATTLNEAVQQIVGEWGRLDIAICNAGGGVGSPEETRASIVEKDLVDVVVARNLTGTIHTCQAVAVPMKEQRSGKIVTVGSQAGHRIEDNGGYAHYGAAKAAVAKYTQYLARDLGPFGVTVNCVAPGYISTGRLAPILSAMGDAQLLDDVPLGRYGTPEDCAGVIEFLSSDLSDYVTGAIIPVDGGLTYS</sequence>
<keyword id="KW-0963">Cytoplasm</keyword>
<keyword id="KW-0903">Direct protein sequencing</keyword>
<keyword id="KW-0520">NAD</keyword>
<keyword id="KW-0560">Oxidoreductase</keyword>